<dbReference type="EC" id="3.1.3.16"/>
<dbReference type="EMBL" id="M96841">
    <property type="protein sequence ID" value="AAA64742.1"/>
    <property type="molecule type" value="mRNA"/>
</dbReference>
<dbReference type="EMBL" id="U60135">
    <property type="protein sequence ID" value="AAD10854.1"/>
    <property type="status" value="ALT_SEQ"/>
    <property type="molecule type" value="Genomic_DNA"/>
</dbReference>
<dbReference type="EMBL" id="AC005956">
    <property type="protein sequence ID" value="AAD23731.1"/>
    <property type="molecule type" value="Genomic_DNA"/>
</dbReference>
<dbReference type="EMBL" id="AC007087">
    <property type="protein sequence ID" value="AAM15383.1"/>
    <property type="molecule type" value="Genomic_DNA"/>
</dbReference>
<dbReference type="EMBL" id="CP002685">
    <property type="protein sequence ID" value="AEC10127.1"/>
    <property type="molecule type" value="Genomic_DNA"/>
</dbReference>
<dbReference type="EMBL" id="BT010166">
    <property type="protein sequence ID" value="AAQ22635.1"/>
    <property type="molecule type" value="mRNA"/>
</dbReference>
<dbReference type="PIR" id="S31163">
    <property type="entry name" value="S31163"/>
</dbReference>
<dbReference type="PIR" id="S52659">
    <property type="entry name" value="S52659"/>
</dbReference>
<dbReference type="RefSeq" id="NP_565974.1">
    <molecule id="Q07100-1"/>
    <property type="nucleotide sequence ID" value="NM_129811.4"/>
</dbReference>
<dbReference type="SMR" id="Q07100"/>
<dbReference type="BioGRID" id="4187">
    <property type="interactions" value="19"/>
</dbReference>
<dbReference type="FunCoup" id="Q07100">
    <property type="interactions" value="3571"/>
</dbReference>
<dbReference type="IntAct" id="Q07100">
    <property type="interactions" value="1"/>
</dbReference>
<dbReference type="STRING" id="3702.Q07100"/>
<dbReference type="PaxDb" id="3702-AT2G42500.1"/>
<dbReference type="ProteomicsDB" id="249207">
    <molecule id="Q07100-1"/>
</dbReference>
<dbReference type="EnsemblPlants" id="AT2G42500.1">
    <molecule id="Q07100-1"/>
    <property type="protein sequence ID" value="AT2G42500.1"/>
    <property type="gene ID" value="AT2G42500"/>
</dbReference>
<dbReference type="GeneID" id="818850"/>
<dbReference type="Gramene" id="AT2G42500.1">
    <molecule id="Q07100-1"/>
    <property type="protein sequence ID" value="AT2G42500.1"/>
    <property type="gene ID" value="AT2G42500"/>
</dbReference>
<dbReference type="KEGG" id="ath:AT2G42500"/>
<dbReference type="Araport" id="AT2G42500"/>
<dbReference type="TAIR" id="AT2G42500">
    <property type="gene designation" value="PP2A-3"/>
</dbReference>
<dbReference type="eggNOG" id="KOG0371">
    <property type="taxonomic scope" value="Eukaryota"/>
</dbReference>
<dbReference type="HOGENOM" id="CLU_004962_8_1_1"/>
<dbReference type="InParanoid" id="Q07100"/>
<dbReference type="OMA" id="EGYNWGQ"/>
<dbReference type="OrthoDB" id="1930084at2759"/>
<dbReference type="PhylomeDB" id="Q07100"/>
<dbReference type="CD-CODE" id="4299E36E">
    <property type="entry name" value="Nucleolus"/>
</dbReference>
<dbReference type="PRO" id="PR:Q07100"/>
<dbReference type="Proteomes" id="UP000006548">
    <property type="component" value="Chromosome 2"/>
</dbReference>
<dbReference type="ExpressionAtlas" id="Q07100">
    <property type="expression patterns" value="baseline and differential"/>
</dbReference>
<dbReference type="GO" id="GO:0005737">
    <property type="term" value="C:cytoplasm"/>
    <property type="evidence" value="ECO:0007005"/>
    <property type="project" value="TAIR"/>
</dbReference>
<dbReference type="GO" id="GO:0005829">
    <property type="term" value="C:cytosol"/>
    <property type="evidence" value="ECO:0000314"/>
    <property type="project" value="TAIR"/>
</dbReference>
<dbReference type="GO" id="GO:0005634">
    <property type="term" value="C:nucleus"/>
    <property type="evidence" value="ECO:0000314"/>
    <property type="project" value="TAIR"/>
</dbReference>
<dbReference type="GO" id="GO:0046872">
    <property type="term" value="F:metal ion binding"/>
    <property type="evidence" value="ECO:0007669"/>
    <property type="project" value="UniProtKB-KW"/>
</dbReference>
<dbReference type="GO" id="GO:0004721">
    <property type="term" value="F:phosphoprotein phosphatase activity"/>
    <property type="evidence" value="ECO:0000314"/>
    <property type="project" value="TAIR"/>
</dbReference>
<dbReference type="GO" id="GO:0004722">
    <property type="term" value="F:protein serine/threonine phosphatase activity"/>
    <property type="evidence" value="ECO:0007669"/>
    <property type="project" value="UniProtKB-EC"/>
</dbReference>
<dbReference type="GO" id="GO:0080022">
    <property type="term" value="P:primary root development"/>
    <property type="evidence" value="ECO:0000315"/>
    <property type="project" value="TAIR"/>
</dbReference>
<dbReference type="GO" id="GO:0048364">
    <property type="term" value="P:root development"/>
    <property type="evidence" value="ECO:0000316"/>
    <property type="project" value="TAIR"/>
</dbReference>
<dbReference type="GO" id="GO:0048863">
    <property type="term" value="P:stem cell differentiation"/>
    <property type="evidence" value="ECO:0000315"/>
    <property type="project" value="TAIR"/>
</dbReference>
<dbReference type="CDD" id="cd07415">
    <property type="entry name" value="MPP_PP2A_PP4_PP6"/>
    <property type="match status" value="1"/>
</dbReference>
<dbReference type="FunFam" id="3.60.21.10:FF:000003">
    <property type="entry name" value="Serine/threonine-protein phosphatase"/>
    <property type="match status" value="1"/>
</dbReference>
<dbReference type="Gene3D" id="3.60.21.10">
    <property type="match status" value="1"/>
</dbReference>
<dbReference type="InterPro" id="IPR004843">
    <property type="entry name" value="Calcineurin-like_PHP_ApaH"/>
</dbReference>
<dbReference type="InterPro" id="IPR029052">
    <property type="entry name" value="Metallo-depent_PP-like"/>
</dbReference>
<dbReference type="InterPro" id="IPR047129">
    <property type="entry name" value="PPA2-like"/>
</dbReference>
<dbReference type="InterPro" id="IPR006186">
    <property type="entry name" value="Ser/Thr-sp_prot-phosphatase"/>
</dbReference>
<dbReference type="PANTHER" id="PTHR45619">
    <property type="entry name" value="SERINE/THREONINE-PROTEIN PHOSPHATASE PP2A-RELATED"/>
    <property type="match status" value="1"/>
</dbReference>
<dbReference type="Pfam" id="PF00149">
    <property type="entry name" value="Metallophos"/>
    <property type="match status" value="1"/>
</dbReference>
<dbReference type="PRINTS" id="PR00114">
    <property type="entry name" value="STPHPHTASE"/>
</dbReference>
<dbReference type="SMART" id="SM00156">
    <property type="entry name" value="PP2Ac"/>
    <property type="match status" value="1"/>
</dbReference>
<dbReference type="SUPFAM" id="SSF56300">
    <property type="entry name" value="Metallo-dependent phosphatases"/>
    <property type="match status" value="1"/>
</dbReference>
<dbReference type="PROSITE" id="PS00125">
    <property type="entry name" value="SER_THR_PHOSPHATASE"/>
    <property type="match status" value="1"/>
</dbReference>
<sequence>MGANSIPTDATIDLDEQISQLMQCKPLSEQQVRALCEKAKEILMDESNVQPVKSPVTICGDIHGQFHDLAELFRIGGMCPDTNYLFMGDYVDRGYYSVETVTLLVALKMRYPQRITILRGNHESRQITQVYGFYDECLRKYGNANVWKIFTDLFDYFPLTALVESEIFCLHGGLSPSIETLDNIRNFDRVQEVPHEGPMCDLLWSDPDDRCGWGISPRGAGYTFGQDISEQFNHTNNLKLIARAHQLVMDGYNWAHEQKVVTIFSAPNYCYRCGNMASILEVDDCRNHTFIQFEPAPRRGEPDVTRRTPDYFL</sequence>
<keyword id="KW-0025">Alternative splicing</keyword>
<keyword id="KW-0963">Cytoplasm</keyword>
<keyword id="KW-0378">Hydrolase</keyword>
<keyword id="KW-0464">Manganese</keyword>
<keyword id="KW-0479">Metal-binding</keyword>
<keyword id="KW-0488">Methylation</keyword>
<keyword id="KW-0597">Phosphoprotein</keyword>
<keyword id="KW-0904">Protein phosphatase</keyword>
<keyword id="KW-1185">Reference proteome</keyword>
<proteinExistence type="evidence at protein level"/>
<comment type="function">
    <text evidence="6 8">Functions redundantly with PP2A4, and is involved in establishing auxin gradients, apical-basal axis of polarity and root and shoot apical meristem during embryogenesis. May dephosphorylate PIN1 and regulate its subcellular distribution for polar auxin transport (PubMed:23167545). Involved in the regulation of formative cell division in roots by dephosphorylating ACR4 protein kinase (PubMed:26792519).</text>
</comment>
<comment type="catalytic activity">
    <reaction>
        <text>O-phospho-L-seryl-[protein] + H2O = L-seryl-[protein] + phosphate</text>
        <dbReference type="Rhea" id="RHEA:20629"/>
        <dbReference type="Rhea" id="RHEA-COMP:9863"/>
        <dbReference type="Rhea" id="RHEA-COMP:11604"/>
        <dbReference type="ChEBI" id="CHEBI:15377"/>
        <dbReference type="ChEBI" id="CHEBI:29999"/>
        <dbReference type="ChEBI" id="CHEBI:43474"/>
        <dbReference type="ChEBI" id="CHEBI:83421"/>
        <dbReference type="EC" id="3.1.3.16"/>
    </reaction>
</comment>
<comment type="catalytic activity">
    <reaction>
        <text>O-phospho-L-threonyl-[protein] + H2O = L-threonyl-[protein] + phosphate</text>
        <dbReference type="Rhea" id="RHEA:47004"/>
        <dbReference type="Rhea" id="RHEA-COMP:11060"/>
        <dbReference type="Rhea" id="RHEA-COMP:11605"/>
        <dbReference type="ChEBI" id="CHEBI:15377"/>
        <dbReference type="ChEBI" id="CHEBI:30013"/>
        <dbReference type="ChEBI" id="CHEBI:43474"/>
        <dbReference type="ChEBI" id="CHEBI:61977"/>
        <dbReference type="EC" id="3.1.3.16"/>
    </reaction>
</comment>
<comment type="cofactor">
    <cofactor evidence="1">
        <name>Mn(2+)</name>
        <dbReference type="ChEBI" id="CHEBI:29035"/>
    </cofactor>
    <text evidence="1">Binds 2 manganese ions per subunit.</text>
</comment>
<comment type="subunit">
    <text evidence="2 5 7 8 9">PP2A consists of a common heterodimeric core enzyme, composed of a 36 kDa catalytic subunit (subunit C) and a 65 kDa constant regulatory subunit (subunit A), that associates with a variety of regulatory subunits such as subunits B (the R2/B/PR55/B55, R3/B''/PR72/PR130/PR59 and R5/B'/B56 families) (By similarity). Interacts with ACR4 (PubMed:26792519). Interacts with TAP46 (PubMed:21216945, PubMed:24357600). Interacts with SIC/RON3 (PubMed:26888284).</text>
</comment>
<comment type="subcellular location">
    <subcellularLocation>
        <location>Cytoplasm</location>
    </subcellularLocation>
</comment>
<comment type="alternative products">
    <event type="alternative splicing"/>
    <isoform>
        <id>Q07100-1</id>
        <name>1</name>
        <sequence type="displayed"/>
    </isoform>
    <text>A number of isoforms are produced. According to EST sequences.</text>
</comment>
<comment type="PTM">
    <text evidence="13">Reversibly methyl esterified on Leu-313 by leucine carboxyl methyltransferase 1 (LCMT1) and pectin methylesterase 1 (PME1). Carboxyl methylation influences the affinity of the catalytic subunit for the different regulatory subunits, thereby modulating the PP2A holoenzyme's substrate specificity, enzyme activity and cellular localization.</text>
</comment>
<comment type="PTM">
    <text evidence="3">Phosphorylation of either threonine (by autophosphorylation-activated protein kinase) or tyrosine results in inactivation of the phosphatase. Auto-dephosphorylation has been suggested as a mechanism for reactivation.</text>
</comment>
<comment type="similarity">
    <text evidence="12">Belongs to the PPP phosphatase family. PP-2A subfamily.</text>
</comment>
<comment type="sequence caution" evidence="12">
    <conflict type="erroneous gene model prediction">
        <sequence resource="EMBL-CDS" id="AAD10854"/>
    </conflict>
</comment>
<feature type="chain" id="PRO_0000058854" description="Serine/threonine-protein phosphatase PP2A-3 catalytic subunit">
    <location>
        <begin position="1"/>
        <end position="313"/>
    </location>
</feature>
<feature type="active site" description="Proton donor" evidence="1">
    <location>
        <position position="122"/>
    </location>
</feature>
<feature type="binding site" evidence="4">
    <location>
        <position position="61"/>
    </location>
    <ligand>
        <name>Mn(2+)</name>
        <dbReference type="ChEBI" id="CHEBI:29035"/>
        <label>1</label>
    </ligand>
</feature>
<feature type="binding site" evidence="4">
    <location>
        <position position="63"/>
    </location>
    <ligand>
        <name>Mn(2+)</name>
        <dbReference type="ChEBI" id="CHEBI:29035"/>
        <label>1</label>
    </ligand>
</feature>
<feature type="binding site" evidence="4">
    <location>
        <position position="89"/>
    </location>
    <ligand>
        <name>Mn(2+)</name>
        <dbReference type="ChEBI" id="CHEBI:29035"/>
        <label>1</label>
    </ligand>
</feature>
<feature type="binding site" evidence="4">
    <location>
        <position position="89"/>
    </location>
    <ligand>
        <name>Mn(2+)</name>
        <dbReference type="ChEBI" id="CHEBI:29035"/>
        <label>2</label>
    </ligand>
</feature>
<feature type="binding site" evidence="4">
    <location>
        <position position="121"/>
    </location>
    <ligand>
        <name>Mn(2+)</name>
        <dbReference type="ChEBI" id="CHEBI:29035"/>
        <label>2</label>
    </ligand>
</feature>
<feature type="binding site" evidence="4">
    <location>
        <position position="171"/>
    </location>
    <ligand>
        <name>Mn(2+)</name>
        <dbReference type="ChEBI" id="CHEBI:29035"/>
        <label>2</label>
    </ligand>
</feature>
<feature type="binding site" evidence="4">
    <location>
        <position position="245"/>
    </location>
    <ligand>
        <name>Mn(2+)</name>
        <dbReference type="ChEBI" id="CHEBI:29035"/>
        <label>2</label>
    </ligand>
</feature>
<feature type="modified residue" description="Leucine methyl ester" evidence="13">
    <location>
        <position position="313"/>
    </location>
</feature>
<feature type="sequence conflict" description="In Ref. 2; AAD10854." evidence="12" ref="2">
    <original>D</original>
    <variation>N</variation>
    <location>
        <position position="15"/>
    </location>
</feature>
<organism>
    <name type="scientific">Arabidopsis thaliana</name>
    <name type="common">Mouse-ear cress</name>
    <dbReference type="NCBI Taxonomy" id="3702"/>
    <lineage>
        <taxon>Eukaryota</taxon>
        <taxon>Viridiplantae</taxon>
        <taxon>Streptophyta</taxon>
        <taxon>Embryophyta</taxon>
        <taxon>Tracheophyta</taxon>
        <taxon>Spermatophyta</taxon>
        <taxon>Magnoliopsida</taxon>
        <taxon>eudicotyledons</taxon>
        <taxon>Gunneridae</taxon>
        <taxon>Pentapetalae</taxon>
        <taxon>rosids</taxon>
        <taxon>malvids</taxon>
        <taxon>Brassicales</taxon>
        <taxon>Brassicaceae</taxon>
        <taxon>Camelineae</taxon>
        <taxon>Arabidopsis</taxon>
    </lineage>
</organism>
<evidence type="ECO:0000250" key="1"/>
<evidence type="ECO:0000250" key="2">
    <source>
        <dbReference type="UniProtKB" id="P62714"/>
    </source>
</evidence>
<evidence type="ECO:0000250" key="3">
    <source>
        <dbReference type="UniProtKB" id="P67774"/>
    </source>
</evidence>
<evidence type="ECO:0000250" key="4">
    <source>
        <dbReference type="UniProtKB" id="P67775"/>
    </source>
</evidence>
<evidence type="ECO:0000269" key="5">
    <source>
    </source>
</evidence>
<evidence type="ECO:0000269" key="6">
    <source>
    </source>
</evidence>
<evidence type="ECO:0000269" key="7">
    <source>
    </source>
</evidence>
<evidence type="ECO:0000269" key="8">
    <source>
    </source>
</evidence>
<evidence type="ECO:0000269" key="9">
    <source>
    </source>
</evidence>
<evidence type="ECO:0000303" key="10">
    <source>
    </source>
</evidence>
<evidence type="ECO:0000303" key="11">
    <source>
    </source>
</evidence>
<evidence type="ECO:0000305" key="12"/>
<evidence type="ECO:0000305" key="13">
    <source>
    </source>
</evidence>
<reference key="1">
    <citation type="journal article" date="1994" name="Plant Mol. Biol.">
        <title>Molecular characterization of a fourth isoform of the catalytic subunit of protein phosphatase 2A from Arabidopsis thaliana.</title>
        <authorList>
            <person name="Casamayor A."/>
            <person name="Perez-Callejon E."/>
            <person name="Pujol G."/>
            <person name="Arino J."/>
            <person name="Ferrer A."/>
        </authorList>
    </citation>
    <scope>NUCLEOTIDE SEQUENCE [MRNA]</scope>
    <source>
        <strain>cv. Columbia GL1</strain>
        <tissue>Leaf</tissue>
    </source>
</reference>
<reference key="2">
    <citation type="journal article" date="1998" name="Gene">
        <title>Molecular cloning and characterization of two phosphatase 2A catalytic subunit genes from Arabidopsis thaliana.</title>
        <authorList>
            <person name="Perez-Callejon E."/>
            <person name="Casamayor A."/>
            <person name="Pujol G."/>
            <person name="Camps M."/>
            <person name="Ferrer A."/>
            <person name="Arino J."/>
        </authorList>
    </citation>
    <scope>NUCLEOTIDE SEQUENCE [GENOMIC DNA]</scope>
</reference>
<reference key="3">
    <citation type="journal article" date="1999" name="Nature">
        <title>Sequence and analysis of chromosome 2 of the plant Arabidopsis thaliana.</title>
        <authorList>
            <person name="Lin X."/>
            <person name="Kaul S."/>
            <person name="Rounsley S.D."/>
            <person name="Shea T.P."/>
            <person name="Benito M.-I."/>
            <person name="Town C.D."/>
            <person name="Fujii C.Y."/>
            <person name="Mason T.M."/>
            <person name="Bowman C.L."/>
            <person name="Barnstead M.E."/>
            <person name="Feldblyum T.V."/>
            <person name="Buell C.R."/>
            <person name="Ketchum K.A."/>
            <person name="Lee J.J."/>
            <person name="Ronning C.M."/>
            <person name="Koo H.L."/>
            <person name="Moffat K.S."/>
            <person name="Cronin L.A."/>
            <person name="Shen M."/>
            <person name="Pai G."/>
            <person name="Van Aken S."/>
            <person name="Umayam L."/>
            <person name="Tallon L.J."/>
            <person name="Gill J.E."/>
            <person name="Adams M.D."/>
            <person name="Carrera A.J."/>
            <person name="Creasy T.H."/>
            <person name="Goodman H.M."/>
            <person name="Somerville C.R."/>
            <person name="Copenhaver G.P."/>
            <person name="Preuss D."/>
            <person name="Nierman W.C."/>
            <person name="White O."/>
            <person name="Eisen J.A."/>
            <person name="Salzberg S.L."/>
            <person name="Fraser C.M."/>
            <person name="Venter J.C."/>
        </authorList>
    </citation>
    <scope>NUCLEOTIDE SEQUENCE [LARGE SCALE GENOMIC DNA]</scope>
    <source>
        <strain>cv. Columbia</strain>
    </source>
</reference>
<reference key="4">
    <citation type="journal article" date="2017" name="Plant J.">
        <title>Araport11: a complete reannotation of the Arabidopsis thaliana reference genome.</title>
        <authorList>
            <person name="Cheng C.Y."/>
            <person name="Krishnakumar V."/>
            <person name="Chan A.P."/>
            <person name="Thibaud-Nissen F."/>
            <person name="Schobel S."/>
            <person name="Town C.D."/>
        </authorList>
    </citation>
    <scope>GENOME REANNOTATION</scope>
    <source>
        <strain>cv. Columbia</strain>
    </source>
</reference>
<reference key="5">
    <citation type="journal article" date="2003" name="Science">
        <title>Empirical analysis of transcriptional activity in the Arabidopsis genome.</title>
        <authorList>
            <person name="Yamada K."/>
            <person name="Lim J."/>
            <person name="Dale J.M."/>
            <person name="Chen H."/>
            <person name="Shinn P."/>
            <person name="Palm C.J."/>
            <person name="Southwick A.M."/>
            <person name="Wu H.C."/>
            <person name="Kim C.J."/>
            <person name="Nguyen M."/>
            <person name="Pham P.K."/>
            <person name="Cheuk R.F."/>
            <person name="Karlin-Newmann G."/>
            <person name="Liu S.X."/>
            <person name="Lam B."/>
            <person name="Sakano H."/>
            <person name="Wu T."/>
            <person name="Yu G."/>
            <person name="Miranda M."/>
            <person name="Quach H.L."/>
            <person name="Tripp M."/>
            <person name="Chang C.H."/>
            <person name="Lee J.M."/>
            <person name="Toriumi M.J."/>
            <person name="Chan M.M."/>
            <person name="Tang C.C."/>
            <person name="Onodera C.S."/>
            <person name="Deng J.M."/>
            <person name="Akiyama K."/>
            <person name="Ansari Y."/>
            <person name="Arakawa T."/>
            <person name="Banh J."/>
            <person name="Banno F."/>
            <person name="Bowser L."/>
            <person name="Brooks S.Y."/>
            <person name="Carninci P."/>
            <person name="Chao Q."/>
            <person name="Choy N."/>
            <person name="Enju A."/>
            <person name="Goldsmith A.D."/>
            <person name="Gurjal M."/>
            <person name="Hansen N.F."/>
            <person name="Hayashizaki Y."/>
            <person name="Johnson-Hopson C."/>
            <person name="Hsuan V.W."/>
            <person name="Iida K."/>
            <person name="Karnes M."/>
            <person name="Khan S."/>
            <person name="Koesema E."/>
            <person name="Ishida J."/>
            <person name="Jiang P.X."/>
            <person name="Jones T."/>
            <person name="Kawai J."/>
            <person name="Kamiya A."/>
            <person name="Meyers C."/>
            <person name="Nakajima M."/>
            <person name="Narusaka M."/>
            <person name="Seki M."/>
            <person name="Sakurai T."/>
            <person name="Satou M."/>
            <person name="Tamse R."/>
            <person name="Vaysberg M."/>
            <person name="Wallender E.K."/>
            <person name="Wong C."/>
            <person name="Yamamura Y."/>
            <person name="Yuan S."/>
            <person name="Shinozaki K."/>
            <person name="Davis R.W."/>
            <person name="Theologis A."/>
            <person name="Ecker J.R."/>
        </authorList>
    </citation>
    <scope>NUCLEOTIDE SEQUENCE [LARGE SCALE MRNA]</scope>
    <source>
        <strain>cv. Columbia</strain>
    </source>
</reference>
<reference key="6">
    <citation type="journal article" date="1993" name="Plant Mol. Biol.">
        <title>Protein phosphatases in higher plants: multiplicity of type 2A phosphatases in Arabidopsis thaliana.</title>
        <authorList>
            <person name="Arino J."/>
            <person name="Perez-Callejon E."/>
            <person name="Cunillera N."/>
            <person name="Camps M."/>
            <person name="Posas F."/>
            <person name="Ferrer A."/>
        </authorList>
    </citation>
    <scope>NUCLEOTIDE SEQUENCE [MRNA] OF 6-313</scope>
    <source>
        <strain>cv. Columbia GL1</strain>
    </source>
</reference>
<reference key="7">
    <citation type="journal article" date="2007" name="Trends Plant Sci.">
        <title>Arabidopsis PPP family of serine/threonine phosphatases.</title>
        <authorList>
            <person name="Farkas I."/>
            <person name="Dombradi V."/>
            <person name="Miskei M."/>
            <person name="Szabados L."/>
            <person name="Koncz C."/>
        </authorList>
    </citation>
    <scope>GENE FAMILY</scope>
    <scope>NOMENCLATURE</scope>
</reference>
<reference key="8">
    <citation type="journal article" date="2011" name="Plant Cell">
        <title>The PP2A regulatory subunit Tap46, a component of the TOR signaling pathway, modulates growth and metabolism in plants.</title>
        <authorList>
            <person name="Ahn C.S."/>
            <person name="Han J.-A."/>
            <person name="Lee H.-S."/>
            <person name="Lee S."/>
            <person name="Pai H.-S."/>
        </authorList>
    </citation>
    <scope>INTERACTION WITH TAP46</scope>
</reference>
<reference key="9">
    <citation type="journal article" date="2013" name="Plant J.">
        <title>Specialized functions of the PP2A subfamily II catalytic subunits PP2A-C3 and PP2A-C4 in the distribution of auxin fluxes and development in Arabidopsis.</title>
        <authorList>
            <person name="Ballesteros I."/>
            <person name="Dominguez T."/>
            <person name="Sauer M."/>
            <person name="Paredes P."/>
            <person name="Duprat A."/>
            <person name="Rojo E."/>
            <person name="Sanmartin M."/>
            <person name="Sanchez-Serrano J.J."/>
        </authorList>
    </citation>
    <scope>FUNCTION</scope>
</reference>
<reference key="10">
    <citation type="journal article" date="2014" name="Plant Physiol.">
        <title>TAP46 plays a positive role in the ABSCISIC ACID INSENSITIVE5-regulated gene expression in Arabidopsis.</title>
        <authorList>
            <person name="Hu R."/>
            <person name="Zhu Y."/>
            <person name="Shen G."/>
            <person name="Zhang H."/>
        </authorList>
    </citation>
    <scope>INTERACTION WITH TAP46</scope>
</reference>
<reference key="11">
    <citation type="journal article" date="2016" name="Proc. Natl. Acad. Sci. U.S.A.">
        <title>PP2A-3 interacts with ACR4 and regulates formative cell division in the Arabidopsis root.</title>
        <authorList>
            <person name="Yue K."/>
            <person name="Sandal P."/>
            <person name="Williams E.L."/>
            <person name="Murphy E."/>
            <person name="Stes E."/>
            <person name="Nikonorova N."/>
            <person name="Ramakrishna P."/>
            <person name="Czyzewicz N."/>
            <person name="Montero-Morales L."/>
            <person name="Kumpf R."/>
            <person name="Lin Z."/>
            <person name="van de Cotte B."/>
            <person name="Iqbal M."/>
            <person name="Van Bel M."/>
            <person name="Van De Slijke E."/>
            <person name="Meyer M.R."/>
            <person name="Gadeyne A."/>
            <person name="Zipfel C."/>
            <person name="De Jaeger G."/>
            <person name="Van Montagu M."/>
            <person name="Van Damme D."/>
            <person name="Gevaert K."/>
            <person name="Rao A.G."/>
            <person name="Beeckman T."/>
            <person name="De Smet I."/>
        </authorList>
    </citation>
    <scope>FUNCTION</scope>
    <scope>INTERACTION WITH ACR4</scope>
</reference>
<reference key="12">
    <citation type="journal article" date="2016" name="Proc. Natl. Acad. Sci. U.S.A.">
        <title>ROTUNDA3 function in plant development by phosphatase 2A-mediated regulation of auxin transporter recycling.</title>
        <authorList>
            <person name="Karampelias M."/>
            <person name="Neyt P."/>
            <person name="De Groeve S."/>
            <person name="Aesaert S."/>
            <person name="Coussens G."/>
            <person name="Rolcik J."/>
            <person name="Bruno L."/>
            <person name="De Winne N."/>
            <person name="Van Minnebruggen A."/>
            <person name="Van Montagu M."/>
            <person name="Ponce M.R."/>
            <person name="Micol J.L."/>
            <person name="Friml J."/>
            <person name="De Jaeger G."/>
            <person name="Van Lijsebettens M."/>
        </authorList>
    </citation>
    <scope>INTERACTION WITH SIC/RON3</scope>
    <source>
        <strain>cv. Columbia</strain>
        <strain>cv. Landsberg erecta</strain>
    </source>
</reference>
<reference key="13">
    <citation type="journal article" date="2017" name="Plant Cell Environ.">
        <title>Methylation of protein phosphatase 2A-influence of regulators and environmental stress factors.</title>
        <authorList>
            <person name="Creighton M.T."/>
            <person name="Kolton A."/>
            <person name="Kataya A.R.A."/>
            <person name="Maple-Groedem J."/>
            <person name="Averkina I.O."/>
            <person name="Heidari B."/>
            <person name="Lillo C."/>
        </authorList>
    </citation>
    <scope>METHYLATION AT LEU-313</scope>
</reference>
<protein>
    <recommendedName>
        <fullName>Serine/threonine-protein phosphatase PP2A-3 catalytic subunit</fullName>
        <ecNumber>3.1.3.16</ecNumber>
    </recommendedName>
    <alternativeName>
        <fullName>Protein phosphatase 2A isoform 3</fullName>
    </alternativeName>
</protein>
<gene>
    <name evidence="11" type="primary">PP2A3</name>
    <name evidence="10" type="synonym">PP2A4</name>
    <name type="ordered locus">At2g42500</name>
    <name type="ORF">MHK10.22</name>
</gene>
<accession>Q07100</accession>
<accession>Q7G9R3</accession>
<accession>Q9ZRF6</accession>
<name>PP2A3_ARATH</name>